<dbReference type="EC" id="1.17.7.4" evidence="1"/>
<dbReference type="EMBL" id="AE006468">
    <property type="protein sequence ID" value="AAL19013.1"/>
    <property type="molecule type" value="Genomic_DNA"/>
</dbReference>
<dbReference type="RefSeq" id="NP_459054.1">
    <property type="nucleotide sequence ID" value="NC_003197.2"/>
</dbReference>
<dbReference type="RefSeq" id="WP_001166422.1">
    <property type="nucleotide sequence ID" value="NC_003197.2"/>
</dbReference>
<dbReference type="SMR" id="P58679"/>
<dbReference type="STRING" id="99287.STM0049"/>
<dbReference type="PaxDb" id="99287-STM0049"/>
<dbReference type="GeneID" id="1251567"/>
<dbReference type="KEGG" id="stm:STM0049"/>
<dbReference type="PATRIC" id="fig|99287.12.peg.51"/>
<dbReference type="HOGENOM" id="CLU_027486_1_0_6"/>
<dbReference type="OMA" id="SEMIHNP"/>
<dbReference type="PhylomeDB" id="P58679"/>
<dbReference type="BioCyc" id="SENT99287:STM0049-MONOMER"/>
<dbReference type="UniPathway" id="UPA00056">
    <property type="reaction ID" value="UER00097"/>
</dbReference>
<dbReference type="UniPathway" id="UPA00059">
    <property type="reaction ID" value="UER00105"/>
</dbReference>
<dbReference type="Proteomes" id="UP000001014">
    <property type="component" value="Chromosome"/>
</dbReference>
<dbReference type="GO" id="GO:0005829">
    <property type="term" value="C:cytosol"/>
    <property type="evidence" value="ECO:0000318"/>
    <property type="project" value="GO_Central"/>
</dbReference>
<dbReference type="GO" id="GO:0051539">
    <property type="term" value="F:4 iron, 4 sulfur cluster binding"/>
    <property type="evidence" value="ECO:0007669"/>
    <property type="project" value="UniProtKB-UniRule"/>
</dbReference>
<dbReference type="GO" id="GO:0051745">
    <property type="term" value="F:4-hydroxy-3-methylbut-2-enyl diphosphate reductase activity"/>
    <property type="evidence" value="ECO:0000318"/>
    <property type="project" value="GO_Central"/>
</dbReference>
<dbReference type="GO" id="GO:0046872">
    <property type="term" value="F:metal ion binding"/>
    <property type="evidence" value="ECO:0007669"/>
    <property type="project" value="UniProtKB-KW"/>
</dbReference>
<dbReference type="GO" id="GO:0050992">
    <property type="term" value="P:dimethylallyl diphosphate biosynthetic process"/>
    <property type="evidence" value="ECO:0007669"/>
    <property type="project" value="UniProtKB-UniRule"/>
</dbReference>
<dbReference type="GO" id="GO:0019288">
    <property type="term" value="P:isopentenyl diphosphate biosynthetic process, methylerythritol 4-phosphate pathway"/>
    <property type="evidence" value="ECO:0000318"/>
    <property type="project" value="GO_Central"/>
</dbReference>
<dbReference type="GO" id="GO:0016114">
    <property type="term" value="P:terpenoid biosynthetic process"/>
    <property type="evidence" value="ECO:0007669"/>
    <property type="project" value="UniProtKB-UniRule"/>
</dbReference>
<dbReference type="CDD" id="cd13944">
    <property type="entry name" value="lytB_ispH"/>
    <property type="match status" value="1"/>
</dbReference>
<dbReference type="FunFam" id="3.40.1010.20:FF:000001">
    <property type="entry name" value="4-hydroxy-3-methylbut-2-enyl diphosphate reductase"/>
    <property type="match status" value="1"/>
</dbReference>
<dbReference type="FunFam" id="3.40.50.11270:FF:000001">
    <property type="entry name" value="4-hydroxy-3-methylbut-2-enyl diphosphate reductase"/>
    <property type="match status" value="1"/>
</dbReference>
<dbReference type="Gene3D" id="3.40.50.11270">
    <property type="match status" value="1"/>
</dbReference>
<dbReference type="Gene3D" id="3.40.1010.20">
    <property type="entry name" value="4-hydroxy-3-methylbut-2-enyl diphosphate reductase, catalytic domain"/>
    <property type="match status" value="2"/>
</dbReference>
<dbReference type="HAMAP" id="MF_00191">
    <property type="entry name" value="IspH"/>
    <property type="match status" value="1"/>
</dbReference>
<dbReference type="InterPro" id="IPR003451">
    <property type="entry name" value="LytB/IspH"/>
</dbReference>
<dbReference type="NCBIfam" id="TIGR00216">
    <property type="entry name" value="ispH_lytB"/>
    <property type="match status" value="1"/>
</dbReference>
<dbReference type="NCBIfam" id="NF002188">
    <property type="entry name" value="PRK01045.1-2"/>
    <property type="match status" value="1"/>
</dbReference>
<dbReference type="NCBIfam" id="NF002190">
    <property type="entry name" value="PRK01045.1-4"/>
    <property type="match status" value="1"/>
</dbReference>
<dbReference type="PANTHER" id="PTHR30426">
    <property type="entry name" value="4-HYDROXY-3-METHYLBUT-2-ENYL DIPHOSPHATE REDUCTASE"/>
    <property type="match status" value="1"/>
</dbReference>
<dbReference type="PANTHER" id="PTHR30426:SF0">
    <property type="entry name" value="4-HYDROXY-3-METHYLBUT-2-ENYL DIPHOSPHATE REDUCTASE"/>
    <property type="match status" value="1"/>
</dbReference>
<dbReference type="Pfam" id="PF02401">
    <property type="entry name" value="LYTB"/>
    <property type="match status" value="1"/>
</dbReference>
<accession>P58679</accession>
<keyword id="KW-0004">4Fe-4S</keyword>
<keyword id="KW-0408">Iron</keyword>
<keyword id="KW-0411">Iron-sulfur</keyword>
<keyword id="KW-0414">Isoprene biosynthesis</keyword>
<keyword id="KW-0479">Metal-binding</keyword>
<keyword id="KW-0560">Oxidoreductase</keyword>
<keyword id="KW-1185">Reference proteome</keyword>
<gene>
    <name evidence="1" type="primary">ispH</name>
    <name type="synonym">lytB</name>
    <name type="ordered locus">STM0049</name>
</gene>
<evidence type="ECO:0000255" key="1">
    <source>
        <dbReference type="HAMAP-Rule" id="MF_00191"/>
    </source>
</evidence>
<feature type="chain" id="PRO_0000128870" description="4-hydroxy-3-methylbut-2-enyl diphosphate reductase">
    <location>
        <begin position="1"/>
        <end position="316"/>
    </location>
</feature>
<feature type="active site" description="Proton donor" evidence="1">
    <location>
        <position position="126"/>
    </location>
</feature>
<feature type="binding site" evidence="1">
    <location>
        <position position="12"/>
    </location>
    <ligand>
        <name>[4Fe-4S] cluster</name>
        <dbReference type="ChEBI" id="CHEBI:49883"/>
    </ligand>
</feature>
<feature type="binding site" evidence="1">
    <location>
        <position position="41"/>
    </location>
    <ligand>
        <name>(2E)-4-hydroxy-3-methylbut-2-enyl diphosphate</name>
        <dbReference type="ChEBI" id="CHEBI:128753"/>
    </ligand>
</feature>
<feature type="binding site" evidence="1">
    <location>
        <position position="41"/>
    </location>
    <ligand>
        <name>dimethylallyl diphosphate</name>
        <dbReference type="ChEBI" id="CHEBI:57623"/>
    </ligand>
</feature>
<feature type="binding site" evidence="1">
    <location>
        <position position="41"/>
    </location>
    <ligand>
        <name>isopentenyl diphosphate</name>
        <dbReference type="ChEBI" id="CHEBI:128769"/>
    </ligand>
</feature>
<feature type="binding site" evidence="1">
    <location>
        <position position="74"/>
    </location>
    <ligand>
        <name>(2E)-4-hydroxy-3-methylbut-2-enyl diphosphate</name>
        <dbReference type="ChEBI" id="CHEBI:128753"/>
    </ligand>
</feature>
<feature type="binding site" evidence="1">
    <location>
        <position position="74"/>
    </location>
    <ligand>
        <name>dimethylallyl diphosphate</name>
        <dbReference type="ChEBI" id="CHEBI:57623"/>
    </ligand>
</feature>
<feature type="binding site" evidence="1">
    <location>
        <position position="74"/>
    </location>
    <ligand>
        <name>isopentenyl diphosphate</name>
        <dbReference type="ChEBI" id="CHEBI:128769"/>
    </ligand>
</feature>
<feature type="binding site" evidence="1">
    <location>
        <position position="96"/>
    </location>
    <ligand>
        <name>[4Fe-4S] cluster</name>
        <dbReference type="ChEBI" id="CHEBI:49883"/>
    </ligand>
</feature>
<feature type="binding site" evidence="1">
    <location>
        <position position="124"/>
    </location>
    <ligand>
        <name>(2E)-4-hydroxy-3-methylbut-2-enyl diphosphate</name>
        <dbReference type="ChEBI" id="CHEBI:128753"/>
    </ligand>
</feature>
<feature type="binding site" evidence="1">
    <location>
        <position position="124"/>
    </location>
    <ligand>
        <name>dimethylallyl diphosphate</name>
        <dbReference type="ChEBI" id="CHEBI:57623"/>
    </ligand>
</feature>
<feature type="binding site" evidence="1">
    <location>
        <position position="124"/>
    </location>
    <ligand>
        <name>isopentenyl diphosphate</name>
        <dbReference type="ChEBI" id="CHEBI:128769"/>
    </ligand>
</feature>
<feature type="binding site" evidence="1">
    <location>
        <position position="167"/>
    </location>
    <ligand>
        <name>(2E)-4-hydroxy-3-methylbut-2-enyl diphosphate</name>
        <dbReference type="ChEBI" id="CHEBI:128753"/>
    </ligand>
</feature>
<feature type="binding site" evidence="1">
    <location>
        <position position="197"/>
    </location>
    <ligand>
        <name>[4Fe-4S] cluster</name>
        <dbReference type="ChEBI" id="CHEBI:49883"/>
    </ligand>
</feature>
<feature type="binding site" evidence="1">
    <location>
        <position position="225"/>
    </location>
    <ligand>
        <name>(2E)-4-hydroxy-3-methylbut-2-enyl diphosphate</name>
        <dbReference type="ChEBI" id="CHEBI:128753"/>
    </ligand>
</feature>
<feature type="binding site" evidence="1">
    <location>
        <position position="225"/>
    </location>
    <ligand>
        <name>dimethylallyl diphosphate</name>
        <dbReference type="ChEBI" id="CHEBI:57623"/>
    </ligand>
</feature>
<feature type="binding site" evidence="1">
    <location>
        <position position="225"/>
    </location>
    <ligand>
        <name>isopentenyl diphosphate</name>
        <dbReference type="ChEBI" id="CHEBI:128769"/>
    </ligand>
</feature>
<feature type="binding site" evidence="1">
    <location>
        <position position="226"/>
    </location>
    <ligand>
        <name>(2E)-4-hydroxy-3-methylbut-2-enyl diphosphate</name>
        <dbReference type="ChEBI" id="CHEBI:128753"/>
    </ligand>
</feature>
<feature type="binding site" evidence="1">
    <location>
        <position position="226"/>
    </location>
    <ligand>
        <name>dimethylallyl diphosphate</name>
        <dbReference type="ChEBI" id="CHEBI:57623"/>
    </ligand>
</feature>
<feature type="binding site" evidence="1">
    <location>
        <position position="226"/>
    </location>
    <ligand>
        <name>isopentenyl diphosphate</name>
        <dbReference type="ChEBI" id="CHEBI:128769"/>
    </ligand>
</feature>
<feature type="binding site" evidence="1">
    <location>
        <position position="227"/>
    </location>
    <ligand>
        <name>(2E)-4-hydroxy-3-methylbut-2-enyl diphosphate</name>
        <dbReference type="ChEBI" id="CHEBI:128753"/>
    </ligand>
</feature>
<feature type="binding site" evidence="1">
    <location>
        <position position="227"/>
    </location>
    <ligand>
        <name>dimethylallyl diphosphate</name>
        <dbReference type="ChEBI" id="CHEBI:57623"/>
    </ligand>
</feature>
<feature type="binding site" evidence="1">
    <location>
        <position position="227"/>
    </location>
    <ligand>
        <name>isopentenyl diphosphate</name>
        <dbReference type="ChEBI" id="CHEBI:128769"/>
    </ligand>
</feature>
<feature type="binding site" evidence="1">
    <location>
        <position position="269"/>
    </location>
    <ligand>
        <name>(2E)-4-hydroxy-3-methylbut-2-enyl diphosphate</name>
        <dbReference type="ChEBI" id="CHEBI:128753"/>
    </ligand>
</feature>
<feature type="binding site" evidence="1">
    <location>
        <position position="269"/>
    </location>
    <ligand>
        <name>dimethylallyl diphosphate</name>
        <dbReference type="ChEBI" id="CHEBI:57623"/>
    </ligand>
</feature>
<feature type="binding site" evidence="1">
    <location>
        <position position="269"/>
    </location>
    <ligand>
        <name>isopentenyl diphosphate</name>
        <dbReference type="ChEBI" id="CHEBI:128769"/>
    </ligand>
</feature>
<reference key="1">
    <citation type="journal article" date="2001" name="Nature">
        <title>Complete genome sequence of Salmonella enterica serovar Typhimurium LT2.</title>
        <authorList>
            <person name="McClelland M."/>
            <person name="Sanderson K.E."/>
            <person name="Spieth J."/>
            <person name="Clifton S.W."/>
            <person name="Latreille P."/>
            <person name="Courtney L."/>
            <person name="Porwollik S."/>
            <person name="Ali J."/>
            <person name="Dante M."/>
            <person name="Du F."/>
            <person name="Hou S."/>
            <person name="Layman D."/>
            <person name="Leonard S."/>
            <person name="Nguyen C."/>
            <person name="Scott K."/>
            <person name="Holmes A."/>
            <person name="Grewal N."/>
            <person name="Mulvaney E."/>
            <person name="Ryan E."/>
            <person name="Sun H."/>
            <person name="Florea L."/>
            <person name="Miller W."/>
            <person name="Stoneking T."/>
            <person name="Nhan M."/>
            <person name="Waterston R."/>
            <person name="Wilson R.K."/>
        </authorList>
    </citation>
    <scope>NUCLEOTIDE SEQUENCE [LARGE SCALE GENOMIC DNA]</scope>
    <source>
        <strain>LT2 / SGSC1412 / ATCC 700720</strain>
    </source>
</reference>
<organism>
    <name type="scientific">Salmonella typhimurium (strain LT2 / SGSC1412 / ATCC 700720)</name>
    <dbReference type="NCBI Taxonomy" id="99287"/>
    <lineage>
        <taxon>Bacteria</taxon>
        <taxon>Pseudomonadati</taxon>
        <taxon>Pseudomonadota</taxon>
        <taxon>Gammaproteobacteria</taxon>
        <taxon>Enterobacterales</taxon>
        <taxon>Enterobacteriaceae</taxon>
        <taxon>Salmonella</taxon>
    </lineage>
</organism>
<protein>
    <recommendedName>
        <fullName evidence="1">4-hydroxy-3-methylbut-2-enyl diphosphate reductase</fullName>
        <shortName evidence="1">HMBPP reductase</shortName>
        <ecNumber evidence="1">1.17.7.4</ecNumber>
    </recommendedName>
</protein>
<name>ISPH_SALTY</name>
<comment type="function">
    <text evidence="1">Catalyzes the conversion of 1-hydroxy-2-methyl-2-(E)-butenyl 4-diphosphate (HMBPP) into a mixture of isopentenyl diphosphate (IPP) and dimethylallyl diphosphate (DMAPP). Acts in the terminal step of the DOXP/MEP pathway for isoprenoid precursor biosynthesis.</text>
</comment>
<comment type="catalytic activity">
    <reaction evidence="1">
        <text>isopentenyl diphosphate + 2 oxidized [2Fe-2S]-[ferredoxin] + H2O = (2E)-4-hydroxy-3-methylbut-2-enyl diphosphate + 2 reduced [2Fe-2S]-[ferredoxin] + 2 H(+)</text>
        <dbReference type="Rhea" id="RHEA:24488"/>
        <dbReference type="Rhea" id="RHEA-COMP:10000"/>
        <dbReference type="Rhea" id="RHEA-COMP:10001"/>
        <dbReference type="ChEBI" id="CHEBI:15377"/>
        <dbReference type="ChEBI" id="CHEBI:15378"/>
        <dbReference type="ChEBI" id="CHEBI:33737"/>
        <dbReference type="ChEBI" id="CHEBI:33738"/>
        <dbReference type="ChEBI" id="CHEBI:128753"/>
        <dbReference type="ChEBI" id="CHEBI:128769"/>
        <dbReference type="EC" id="1.17.7.4"/>
    </reaction>
</comment>
<comment type="catalytic activity">
    <reaction evidence="1">
        <text>dimethylallyl diphosphate + 2 oxidized [2Fe-2S]-[ferredoxin] + H2O = (2E)-4-hydroxy-3-methylbut-2-enyl diphosphate + 2 reduced [2Fe-2S]-[ferredoxin] + 2 H(+)</text>
        <dbReference type="Rhea" id="RHEA:24825"/>
        <dbReference type="Rhea" id="RHEA-COMP:10000"/>
        <dbReference type="Rhea" id="RHEA-COMP:10001"/>
        <dbReference type="ChEBI" id="CHEBI:15377"/>
        <dbReference type="ChEBI" id="CHEBI:15378"/>
        <dbReference type="ChEBI" id="CHEBI:33737"/>
        <dbReference type="ChEBI" id="CHEBI:33738"/>
        <dbReference type="ChEBI" id="CHEBI:57623"/>
        <dbReference type="ChEBI" id="CHEBI:128753"/>
        <dbReference type="EC" id="1.17.7.4"/>
    </reaction>
</comment>
<comment type="cofactor">
    <cofactor evidence="1">
        <name>[4Fe-4S] cluster</name>
        <dbReference type="ChEBI" id="CHEBI:49883"/>
    </cofactor>
    <text evidence="1">Binds 1 [4Fe-4S] cluster per subunit.</text>
</comment>
<comment type="pathway">
    <text evidence="1">Isoprenoid biosynthesis; dimethylallyl diphosphate biosynthesis; dimethylallyl diphosphate from (2E)-4-hydroxy-3-methylbutenyl diphosphate: step 1/1.</text>
</comment>
<comment type="pathway">
    <text evidence="1">Isoprenoid biosynthesis; isopentenyl diphosphate biosynthesis via DXP pathway; isopentenyl diphosphate from 1-deoxy-D-xylulose 5-phosphate: step 6/6.</text>
</comment>
<comment type="subunit">
    <text evidence="1">Homodimer.</text>
</comment>
<comment type="similarity">
    <text evidence="1">Belongs to the IspH family.</text>
</comment>
<proteinExistence type="inferred from homology"/>
<sequence length="316" mass="34527">MQILLANPRGFCAGVDRAISIVENALAIYGAPIYVRHEVVHNRYVVDSLRKRGAIFIEQISEVPDGAILIFSAHGVSQAVRNEAKSRDLTVFDATCPLVTKVHMEVARASRRGEESILIGHAGHPEVEGTMGQYSNPEGGMYLVESPEDVWTLNVKNEGKLSFMTQTTLSVDDTSDVIDALRKRFPKIVGPRKDDICYATTNRQEAVRALAEQADVVLVVGSKNSSNSNRLAELAQRMGRTAFLIDDAADIQEAWVKEAACVGVTAGASAPDILVQNVIARLREFGGGEAVTLEGREENIVFEVPKELRVDVREVE</sequence>